<keyword id="KW-0325">Glycoprotein</keyword>
<keyword id="KW-0378">Hydrolase</keyword>
<keyword id="KW-0479">Metal-binding</keyword>
<keyword id="KW-0482">Metalloprotease</keyword>
<keyword id="KW-0645">Protease</keyword>
<keyword id="KW-0964">Secreted</keyword>
<keyword id="KW-0732">Signal</keyword>
<keyword id="KW-0843">Virulence</keyword>
<keyword id="KW-0862">Zinc</keyword>
<keyword id="KW-0865">Zymogen</keyword>
<reference key="1">
    <citation type="journal article" date="2002" name="Infect. Immun.">
        <title>Secreted metalloprotease gene family of Microsporum canis.</title>
        <authorList>
            <person name="Brouta F."/>
            <person name="Descamps F."/>
            <person name="Monod M."/>
            <person name="Vermout S."/>
            <person name="Losson B."/>
            <person name="Mignon B."/>
        </authorList>
    </citation>
    <scope>NUCLEOTIDE SEQUENCE [GENOMIC DNA]</scope>
    <source>
        <strain>IHEM 15221</strain>
    </source>
</reference>
<reference key="2">
    <citation type="journal article" date="1998" name="Med. Mycol.">
        <title>Purification and characterization of a 315 kDa keratinolytic subtilisin-like serine protease from Microsporum canis and evidence of its secretion in naturally infected cats.</title>
        <authorList>
            <person name="Mignon B."/>
            <person name="Swinnen M."/>
            <person name="Bouchara J.P."/>
            <person name="Hofinger M."/>
            <person name="Nikkels A."/>
            <person name="Pierard G."/>
            <person name="Gerday C."/>
            <person name="Losson B."/>
        </authorList>
    </citation>
    <scope>SUBCELLULAR LOCATION</scope>
    <scope>FUNCTION</scope>
    <scope>BIOPHYSICOCHEMICAL PROPERTIES</scope>
</reference>
<name>MEP1_ARTOT</name>
<comment type="function">
    <text evidence="1 4">Secreted metalloproteinase probably acting as a virulence factor.</text>
</comment>
<comment type="cofactor">
    <cofactor evidence="1">
        <name>Zn(2+)</name>
        <dbReference type="ChEBI" id="CHEBI:29105"/>
    </cofactor>
    <text evidence="1">Binds 1 zinc ion per subunit.</text>
</comment>
<comment type="activity regulation">
    <text>PMSF, soybean trypsin inhibitor (SBTI) and chymostatin strongly inhibit the proteinase.</text>
</comment>
<comment type="biophysicochemical properties">
    <kinetics>
        <KM evidence="4">0.37 mM for the synthetic substrate N-Suc-Ala-Ala-Pro-Phe-p-nitroanilid</KM>
    </kinetics>
    <phDependence>
        <text evidence="4">Optimum pH is 9.</text>
    </phDependence>
</comment>
<comment type="subcellular location">
    <subcellularLocation>
        <location evidence="4">Secreted</location>
    </subcellularLocation>
</comment>
<comment type="similarity">
    <text evidence="5">Belongs to the peptidase M36 family.</text>
</comment>
<dbReference type="EC" id="3.4.24.-"/>
<dbReference type="EMBL" id="AJ490184">
    <property type="protein sequence ID" value="CAD35289.1"/>
    <property type="molecule type" value="Genomic_DNA"/>
</dbReference>
<dbReference type="SMR" id="Q8J0D5"/>
<dbReference type="MEROPS" id="M36.001"/>
<dbReference type="GlyCosmos" id="Q8J0D5">
    <property type="glycosylation" value="2 sites, No reported glycans"/>
</dbReference>
<dbReference type="GO" id="GO:0005576">
    <property type="term" value="C:extracellular region"/>
    <property type="evidence" value="ECO:0007669"/>
    <property type="project" value="UniProtKB-SubCell"/>
</dbReference>
<dbReference type="GO" id="GO:0004222">
    <property type="term" value="F:metalloendopeptidase activity"/>
    <property type="evidence" value="ECO:0007669"/>
    <property type="project" value="InterPro"/>
</dbReference>
<dbReference type="GO" id="GO:0008270">
    <property type="term" value="F:zinc ion binding"/>
    <property type="evidence" value="ECO:0007669"/>
    <property type="project" value="InterPro"/>
</dbReference>
<dbReference type="GO" id="GO:0006508">
    <property type="term" value="P:proteolysis"/>
    <property type="evidence" value="ECO:0007669"/>
    <property type="project" value="UniProtKB-KW"/>
</dbReference>
<dbReference type="CDD" id="cd09596">
    <property type="entry name" value="M36"/>
    <property type="match status" value="1"/>
</dbReference>
<dbReference type="Gene3D" id="3.10.170.10">
    <property type="match status" value="1"/>
</dbReference>
<dbReference type="Gene3D" id="1.10.390.10">
    <property type="entry name" value="Neutral Protease Domain 2"/>
    <property type="match status" value="1"/>
</dbReference>
<dbReference type="InterPro" id="IPR011096">
    <property type="entry name" value="FTP_domain"/>
</dbReference>
<dbReference type="InterPro" id="IPR050371">
    <property type="entry name" value="Fungal_virulence_M36"/>
</dbReference>
<dbReference type="InterPro" id="IPR001842">
    <property type="entry name" value="Peptidase_M36"/>
</dbReference>
<dbReference type="InterPro" id="IPR027268">
    <property type="entry name" value="Peptidase_M4/M1_CTD_sf"/>
</dbReference>
<dbReference type="PANTHER" id="PTHR33478">
    <property type="entry name" value="EXTRACELLULAR METALLOPROTEINASE MEP"/>
    <property type="match status" value="1"/>
</dbReference>
<dbReference type="PANTHER" id="PTHR33478:SF1">
    <property type="entry name" value="EXTRACELLULAR METALLOPROTEINASE MEP"/>
    <property type="match status" value="1"/>
</dbReference>
<dbReference type="Pfam" id="PF07504">
    <property type="entry name" value="FTP"/>
    <property type="match status" value="1"/>
</dbReference>
<dbReference type="Pfam" id="PF02128">
    <property type="entry name" value="Peptidase_M36"/>
    <property type="match status" value="1"/>
</dbReference>
<dbReference type="PRINTS" id="PR00999">
    <property type="entry name" value="FUNGALYSIN"/>
</dbReference>
<dbReference type="SUPFAM" id="SSF55486">
    <property type="entry name" value="Metalloproteases ('zincins'), catalytic domain"/>
    <property type="match status" value="1"/>
</dbReference>
<dbReference type="PROSITE" id="PS00142">
    <property type="entry name" value="ZINC_PROTEASE"/>
    <property type="match status" value="1"/>
</dbReference>
<evidence type="ECO:0000250" key="1"/>
<evidence type="ECO:0000255" key="2"/>
<evidence type="ECO:0000255" key="3">
    <source>
        <dbReference type="PROSITE-ProRule" id="PRU10095"/>
    </source>
</evidence>
<evidence type="ECO:0000269" key="4">
    <source>
    </source>
</evidence>
<evidence type="ECO:0000305" key="5"/>
<feature type="signal peptide" evidence="2">
    <location>
        <begin position="1"/>
        <end position="19"/>
    </location>
</feature>
<feature type="propeptide" id="PRO_5000068600" evidence="1">
    <location>
        <begin position="20"/>
        <end position="246"/>
    </location>
</feature>
<feature type="chain" id="PRO_5000068601" description="Extracellular metalloproteinase 1">
    <location>
        <begin position="247"/>
        <end position="632"/>
    </location>
</feature>
<feature type="active site" evidence="3">
    <location>
        <position position="431"/>
    </location>
</feature>
<feature type="binding site" evidence="3">
    <location>
        <position position="430"/>
    </location>
    <ligand>
        <name>Zn(2+)</name>
        <dbReference type="ChEBI" id="CHEBI:29105"/>
        <note>catalytic</note>
    </ligand>
</feature>
<feature type="binding site" evidence="3">
    <location>
        <position position="434"/>
    </location>
    <ligand>
        <name>Zn(2+)</name>
        <dbReference type="ChEBI" id="CHEBI:29105"/>
        <note>catalytic</note>
    </ligand>
</feature>
<feature type="glycosylation site" description="N-linked (GlcNAc...) asparagine" evidence="2">
    <location>
        <position position="284"/>
    </location>
</feature>
<feature type="glycosylation site" description="N-linked (GlcNAc...) asparagine" evidence="2">
    <location>
        <position position="591"/>
    </location>
</feature>
<accession>Q8J0D5</accession>
<protein>
    <recommendedName>
        <fullName>Extracellular metalloproteinase 1</fullName>
        <ecNumber>3.4.24.-</ecNumber>
    </recommendedName>
    <alternativeName>
        <fullName>Fungalysin MEP1</fullName>
    </alternativeName>
</protein>
<sequence length="632" mass="69770">MHGLLLAAGLISLPLHVLAHPQPSSTSLAGRAVDLNEYRIGHRSSYTSNDEMMKQPSIASFRAGTYVEVATEMVKQTMPNMEFRLVDDHYIGQSGIGHVRFRQTMHGIDIDNSDFNVNIGQDGKVLSHGNSFYTGPAPESSPVQKRDFSDPMQALHGVRKALNLPIKAEGATVENMSEHKVMFKGTSGALSDPTAKLCYMAKEDGSLALTWRVETDIGDNWLLSYMDAKDTGKVHNVVDYVAHATFQVYKWGLADPTEGNREILTNPWNLQTSPLTWLADGQNNFTATRGNNAIAQYNPDGGNDYENNYRPSPKNLKFEYPYSANMDPPKTYIDASVTQLFYTSNVCHDLYYMLGFNEKAGNFQVNNRGQGGKGNDYVILNAQDGSGTNNANFATPPDGQPGRMRAYIWTRANPPRDASFEAGTIIHEYTHGLSNRLCGGPANSRCLNAIESGGMGEGWGDFYATAVRLKPKDTRKTNYVKGGWVNNSPKGVRMYPYSTDMSVNPLVYTSNNQLNEVHAIGTVWATMLYELLWNLIDKHGKNDGPVPIFKNGIPSDGKYLAMKIVMDGMAIQPCNPNFVQARDAILDADKNLTKASNKCEIWKAFAKRGLGVGAKFDPKNRIGSNEVPKECK</sequence>
<gene>
    <name type="primary">MEP1</name>
</gene>
<organism>
    <name type="scientific">Arthroderma otae</name>
    <name type="common">Microsporum canis</name>
    <dbReference type="NCBI Taxonomy" id="63405"/>
    <lineage>
        <taxon>Eukaryota</taxon>
        <taxon>Fungi</taxon>
        <taxon>Dikarya</taxon>
        <taxon>Ascomycota</taxon>
        <taxon>Pezizomycotina</taxon>
        <taxon>Eurotiomycetes</taxon>
        <taxon>Eurotiomycetidae</taxon>
        <taxon>Onygenales</taxon>
        <taxon>Arthrodermataceae</taxon>
        <taxon>Microsporum</taxon>
    </lineage>
</organism>
<proteinExistence type="evidence at protein level"/>